<proteinExistence type="evidence at protein level"/>
<name>3S11_NAJNI</name>
<accession>P68419</accession>
<accession>P01429</accession>
<organism>
    <name type="scientific">Naja nivea</name>
    <name type="common">Cape cobra</name>
    <name type="synonym">Coluber niveus</name>
    <dbReference type="NCBI Taxonomy" id="8655"/>
    <lineage>
        <taxon>Eukaryota</taxon>
        <taxon>Metazoa</taxon>
        <taxon>Chordata</taxon>
        <taxon>Craniata</taxon>
        <taxon>Vertebrata</taxon>
        <taxon>Euteleostomi</taxon>
        <taxon>Lepidosauria</taxon>
        <taxon>Squamata</taxon>
        <taxon>Bifurcata</taxon>
        <taxon>Unidentata</taxon>
        <taxon>Episquamata</taxon>
        <taxon>Toxicofera</taxon>
        <taxon>Serpentes</taxon>
        <taxon>Colubroidea</taxon>
        <taxon>Elapidae</taxon>
        <taxon>Elapinae</taxon>
        <taxon>Naja</taxon>
    </lineage>
</organism>
<protein>
    <recommendedName>
        <fullName>Short neurotoxin 1</fullName>
    </recommendedName>
    <alternativeName>
        <fullName>Neurotoxin delta</fullName>
    </alternativeName>
</protein>
<dbReference type="PIR" id="A92084">
    <property type="entry name" value="N1NJ2C"/>
</dbReference>
<dbReference type="SMR" id="P68419"/>
<dbReference type="GO" id="GO:0005576">
    <property type="term" value="C:extracellular region"/>
    <property type="evidence" value="ECO:0007669"/>
    <property type="project" value="UniProtKB-SubCell"/>
</dbReference>
<dbReference type="GO" id="GO:0030550">
    <property type="term" value="F:acetylcholine receptor inhibitor activity"/>
    <property type="evidence" value="ECO:0007669"/>
    <property type="project" value="UniProtKB-KW"/>
</dbReference>
<dbReference type="GO" id="GO:0099106">
    <property type="term" value="F:ion channel regulator activity"/>
    <property type="evidence" value="ECO:0007669"/>
    <property type="project" value="UniProtKB-KW"/>
</dbReference>
<dbReference type="GO" id="GO:0090729">
    <property type="term" value="F:toxin activity"/>
    <property type="evidence" value="ECO:0007669"/>
    <property type="project" value="UniProtKB-KW"/>
</dbReference>
<dbReference type="CDD" id="cd00206">
    <property type="entry name" value="TFP_snake_toxin"/>
    <property type="match status" value="1"/>
</dbReference>
<dbReference type="FunFam" id="2.10.60.10:FF:000024">
    <property type="entry name" value="Cytotoxin 1"/>
    <property type="match status" value="1"/>
</dbReference>
<dbReference type="Gene3D" id="2.10.60.10">
    <property type="entry name" value="CD59"/>
    <property type="match status" value="1"/>
</dbReference>
<dbReference type="InterPro" id="IPR003571">
    <property type="entry name" value="Snake_3FTx"/>
</dbReference>
<dbReference type="InterPro" id="IPR045860">
    <property type="entry name" value="Snake_toxin-like_sf"/>
</dbReference>
<dbReference type="InterPro" id="IPR018354">
    <property type="entry name" value="Snake_toxin_con_site"/>
</dbReference>
<dbReference type="InterPro" id="IPR054131">
    <property type="entry name" value="Toxin_cobra-type"/>
</dbReference>
<dbReference type="Pfam" id="PF21947">
    <property type="entry name" value="Toxin_cobra-type"/>
    <property type="match status" value="1"/>
</dbReference>
<dbReference type="SUPFAM" id="SSF57302">
    <property type="entry name" value="Snake toxin-like"/>
    <property type="match status" value="1"/>
</dbReference>
<dbReference type="PROSITE" id="PS00272">
    <property type="entry name" value="SNAKE_TOXIN"/>
    <property type="match status" value="1"/>
</dbReference>
<evidence type="ECO:0000250" key="1">
    <source>
        <dbReference type="UniProtKB" id="P0C1Z0"/>
    </source>
</evidence>
<evidence type="ECO:0000269" key="2">
    <source>
    </source>
</evidence>
<evidence type="ECO:0000305" key="3"/>
<reference key="1">
    <citation type="journal article" date="1971" name="J. Biol. Chem.">
        <title>Snake venom toxins. Purification and properties of three toxins from Naja nivea (Linnaeus) (Cape cobra) venom and the amino acid sequence of toxin delta.</title>
        <authorList>
            <person name="Botes D.P."/>
            <person name="Strydom D.J."/>
            <person name="Anderson C.G."/>
            <person name="Christensen P.A."/>
        </authorList>
    </citation>
    <scope>PROTEIN SEQUENCE</scope>
    <scope>TOXIC DOSE</scope>
    <scope>SUBCELLULAR LOCATION</scope>
    <source>
        <tissue>Venom</tissue>
    </source>
</reference>
<feature type="chain" id="PRO_0000093605" description="Short neurotoxin 1" evidence="2">
    <location>
        <begin position="1"/>
        <end position="61"/>
    </location>
</feature>
<feature type="disulfide bond" evidence="1">
    <location>
        <begin position="3"/>
        <end position="23"/>
    </location>
</feature>
<feature type="disulfide bond" evidence="1">
    <location>
        <begin position="17"/>
        <end position="40"/>
    </location>
</feature>
<feature type="disulfide bond" evidence="1">
    <location>
        <begin position="42"/>
        <end position="53"/>
    </location>
</feature>
<feature type="disulfide bond" evidence="1">
    <location>
        <begin position="54"/>
        <end position="59"/>
    </location>
</feature>
<sequence>LECHNQQSSQPPTTKTCPGETNCYKKRWRDHRGSITERGCGCPSVKKGIEINCCTTDKCNN</sequence>
<keyword id="KW-0008">Acetylcholine receptor inhibiting toxin</keyword>
<keyword id="KW-0903">Direct protein sequencing</keyword>
<keyword id="KW-1015">Disulfide bond</keyword>
<keyword id="KW-0872">Ion channel impairing toxin</keyword>
<keyword id="KW-0528">Neurotoxin</keyword>
<keyword id="KW-0629">Postsynaptic neurotoxin</keyword>
<keyword id="KW-0964">Secreted</keyword>
<keyword id="KW-0800">Toxin</keyword>
<comment type="function">
    <text>Binds to muscle nicotinic acetylcholine receptor (nAChR) and inhibit acetylcholine from binding to the receptor, thereby impairing neuromuscular transmission.</text>
</comment>
<comment type="subcellular location">
    <subcellularLocation>
        <location evidence="2">Secreted</location>
    </subcellularLocation>
</comment>
<comment type="tissue specificity">
    <text evidence="3">Expressed by the venom gland.</text>
</comment>
<comment type="toxic dose">
    <text evidence="2">LD(50) is 0.086 mg/kg by intravenous injection.</text>
</comment>
<comment type="similarity">
    <text evidence="3">Belongs to the three-finger toxin family. Short-chain subfamily. Type I alpha-neurotoxin sub-subfamily.</text>
</comment>